<organism>
    <name type="scientific">Arabidopsis thaliana</name>
    <name type="common">Mouse-ear cress</name>
    <dbReference type="NCBI Taxonomy" id="3702"/>
    <lineage>
        <taxon>Eukaryota</taxon>
        <taxon>Viridiplantae</taxon>
        <taxon>Streptophyta</taxon>
        <taxon>Embryophyta</taxon>
        <taxon>Tracheophyta</taxon>
        <taxon>Spermatophyta</taxon>
        <taxon>Magnoliopsida</taxon>
        <taxon>eudicotyledons</taxon>
        <taxon>Gunneridae</taxon>
        <taxon>Pentapetalae</taxon>
        <taxon>rosids</taxon>
        <taxon>malvids</taxon>
        <taxon>Brassicales</taxon>
        <taxon>Brassicaceae</taxon>
        <taxon>Camelineae</taxon>
        <taxon>Arabidopsis</taxon>
    </lineage>
</organism>
<comment type="function">
    <text evidence="2">Omega-amidase involved in the metabolism of asparagine. Probably also closely coupled with glutamine transamination in the methionine salvage cycle. Can use alpha-ketosuccinamate and alpha-hydroxysuccinamate as substrates, producing respectively oxaloacetate and malate, or alpha-ketoglutaramate, producing alpha-ketoglutarate.</text>
</comment>
<comment type="catalytic activity">
    <reaction evidence="2">
        <text>a monoamide of a dicarboxylate + H2O = a dicarboxylate + NH4(+)</text>
        <dbReference type="Rhea" id="RHEA:11716"/>
        <dbReference type="ChEBI" id="CHEBI:15377"/>
        <dbReference type="ChEBI" id="CHEBI:28938"/>
        <dbReference type="ChEBI" id="CHEBI:28965"/>
        <dbReference type="ChEBI" id="CHEBI:77450"/>
        <dbReference type="EC" id="3.5.1.3"/>
    </reaction>
    <physiologicalReaction direction="left-to-right" evidence="2">
        <dbReference type="Rhea" id="RHEA:11717"/>
    </physiologicalReaction>
</comment>
<comment type="biophysicochemical properties">
    <kinetics>
        <KM evidence="2">6.13 mM for alpha-ketosuccinamate</KM>
        <KM evidence="2">4.43 mM for alpha-ketoglutaramate</KM>
        <KM evidence="2">5.58 mM for alpha-hydroxysuccinamate</KM>
        <Vmax evidence="2">0.785 umol/sec/mg enzyme with alpha-ketosuccinamate as substrate</Vmax>
        <Vmax evidence="2">0.836 umol/sec/mg enzyme with alpha-ketoglutaramate as substrate</Vmax>
        <Vmax evidence="2">0.865 umol/sec/mg enzyme with alpha-hydroxysuccinamate as substrate</Vmax>
    </kinetics>
</comment>
<comment type="subcellular location">
    <subcellularLocation>
        <location evidence="5">Plastid</location>
        <location evidence="5">Chloroplast</location>
    </subcellularLocation>
</comment>
<comment type="alternative products">
    <event type="alternative splicing"/>
    <isoform>
        <id>Q8RUF8-1</id>
        <name>1</name>
        <sequence type="displayed"/>
    </isoform>
    <isoform>
        <id>Q8RUF8-2</id>
        <name>2</name>
        <sequence type="described" ref="VSP_053942 VSP_053943"/>
    </isoform>
</comment>
<comment type="induction">
    <text evidence="2">Down-regulated in roots after treatment with asparagine.</text>
</comment>
<comment type="disruption phenotype">
    <text evidence="2">2-fold higher levels of alpha-ketosuccinamate and 3-fold higher levels of alpha-hydroxysuccinamate.</text>
</comment>
<comment type="similarity">
    <text evidence="5">Belongs to the nitrilase superfamily. NIT1/NIT2 family.</text>
</comment>
<comment type="caution">
    <text evidence="5">The T-DNA insertion may still allow the production of a functional cytosolic form of the protein, if translation is initiated from the second initiation codon, encoding Met-63 in the full-length protein.</text>
</comment>
<comment type="sequence caution" evidence="5">
    <conflict type="erroneous gene model prediction">
        <sequence resource="EMBL-CDS" id="CAB87677"/>
    </conflict>
</comment>
<comment type="sequence caution" evidence="5">
    <conflict type="erroneous initiation">
        <sequence resource="EMBL-CDS" id="CAB87677"/>
    </conflict>
    <text>Truncated N-terminus.</text>
</comment>
<keyword id="KW-0007">Acetylation</keyword>
<keyword id="KW-0025">Alternative splicing</keyword>
<keyword id="KW-0150">Chloroplast</keyword>
<keyword id="KW-0378">Hydrolase</keyword>
<keyword id="KW-0934">Plastid</keyword>
<keyword id="KW-1185">Reference proteome</keyword>
<keyword id="KW-0809">Transit peptide</keyword>
<name>NILP3_ARATH</name>
<feature type="transit peptide" description="Chloroplast" evidence="8">
    <location>
        <begin position="1"/>
        <end position="63"/>
    </location>
</feature>
<feature type="chain" id="PRO_0000426706" description="Omega-amidase, chloroplastic">
    <location>
        <begin position="64"/>
        <end position="369"/>
    </location>
</feature>
<feature type="domain" description="CN hydrolase" evidence="1">
    <location>
        <begin position="88"/>
        <end position="337"/>
    </location>
</feature>
<feature type="active site" description="Proton acceptor" evidence="1">
    <location>
        <position position="127"/>
    </location>
</feature>
<feature type="active site" description="Proton donor" evidence="1">
    <location>
        <position position="201"/>
    </location>
</feature>
<feature type="active site" description="Nucleophile" evidence="1">
    <location>
        <position position="242"/>
    </location>
</feature>
<feature type="modified residue" description="N-acetylalanine" evidence="8">
    <location>
        <position position="64"/>
    </location>
</feature>
<feature type="splice variant" id="VSP_053942" description="In isoform 2." evidence="4">
    <original>LYVAT</original>
    <variation>VHEPS</variation>
    <location>
        <begin position="290"/>
        <end position="294"/>
    </location>
</feature>
<feature type="splice variant" id="VSP_053943" description="In isoform 2." evidence="4">
    <location>
        <begin position="295"/>
        <end position="369"/>
    </location>
</feature>
<protein>
    <recommendedName>
        <fullName evidence="5">Omega-amidase, chloroplastic</fullName>
        <ecNumber evidence="2">3.5.1.3</ecNumber>
    </recommendedName>
    <alternativeName>
        <fullName evidence="3">Nitrilase-like protein 3</fullName>
    </alternativeName>
</protein>
<dbReference type="EC" id="3.5.1.3" evidence="2"/>
<dbReference type="EMBL" id="AL163812">
    <property type="protein sequence ID" value="CAB87677.1"/>
    <property type="status" value="ALT_SEQ"/>
    <property type="molecule type" value="Genomic_DNA"/>
</dbReference>
<dbReference type="EMBL" id="CP002688">
    <property type="protein sequence ID" value="AED91753.1"/>
    <property type="molecule type" value="Genomic_DNA"/>
</dbReference>
<dbReference type="EMBL" id="CP002688">
    <property type="protein sequence ID" value="AED91754.1"/>
    <property type="molecule type" value="Genomic_DNA"/>
</dbReference>
<dbReference type="EMBL" id="AY075592">
    <property type="protein sequence ID" value="AAL91613.1"/>
    <property type="molecule type" value="mRNA"/>
</dbReference>
<dbReference type="EMBL" id="AY093711">
    <property type="protein sequence ID" value="AAM10335.1"/>
    <property type="molecule type" value="mRNA"/>
</dbReference>
<dbReference type="EMBL" id="BX829894">
    <property type="status" value="NOT_ANNOTATED_CDS"/>
    <property type="molecule type" value="mRNA"/>
</dbReference>
<dbReference type="PIR" id="T48563">
    <property type="entry name" value="T48563"/>
</dbReference>
<dbReference type="RefSeq" id="NP_196765.2">
    <molecule id="Q8RUF8-1"/>
    <property type="nucleotide sequence ID" value="NM_121242.5"/>
</dbReference>
<dbReference type="RefSeq" id="NP_974769.1">
    <molecule id="Q8RUF8-2"/>
    <property type="nucleotide sequence ID" value="NM_203040.1"/>
</dbReference>
<dbReference type="SMR" id="Q8RUF8"/>
<dbReference type="BioGRID" id="16355">
    <property type="interactions" value="25"/>
</dbReference>
<dbReference type="FunCoup" id="Q8RUF8">
    <property type="interactions" value="3426"/>
</dbReference>
<dbReference type="STRING" id="3702.Q8RUF8"/>
<dbReference type="iPTMnet" id="Q8RUF8"/>
<dbReference type="PaxDb" id="3702-AT5G12040.1"/>
<dbReference type="ProteomicsDB" id="249390">
    <molecule id="Q8RUF8-1"/>
</dbReference>
<dbReference type="EnsemblPlants" id="AT5G12040.1">
    <molecule id="Q8RUF8-1"/>
    <property type="protein sequence ID" value="AT5G12040.1"/>
    <property type="gene ID" value="AT5G12040"/>
</dbReference>
<dbReference type="EnsemblPlants" id="AT5G12040.2">
    <molecule id="Q8RUF8-2"/>
    <property type="protein sequence ID" value="AT5G12040.2"/>
    <property type="gene ID" value="AT5G12040"/>
</dbReference>
<dbReference type="GeneID" id="831077"/>
<dbReference type="Gramene" id="AT5G12040.1">
    <molecule id="Q8RUF8-1"/>
    <property type="protein sequence ID" value="AT5G12040.1"/>
    <property type="gene ID" value="AT5G12040"/>
</dbReference>
<dbReference type="Gramene" id="AT5G12040.2">
    <molecule id="Q8RUF8-2"/>
    <property type="protein sequence ID" value="AT5G12040.2"/>
    <property type="gene ID" value="AT5G12040"/>
</dbReference>
<dbReference type="KEGG" id="ath:AT5G12040"/>
<dbReference type="Araport" id="AT5G12040"/>
<dbReference type="TAIR" id="AT5G12040"/>
<dbReference type="eggNOG" id="KOG0806">
    <property type="taxonomic scope" value="Eukaryota"/>
</dbReference>
<dbReference type="InParanoid" id="Q8RUF8"/>
<dbReference type="OMA" id="MQSKPYA"/>
<dbReference type="PhylomeDB" id="Q8RUF8"/>
<dbReference type="BioCyc" id="ARA:AT5G12040-MONOMER"/>
<dbReference type="BRENDA" id="3.5.1.3">
    <property type="organism ID" value="399"/>
</dbReference>
<dbReference type="SABIO-RK" id="Q8RUF8"/>
<dbReference type="CD-CODE" id="4299E36E">
    <property type="entry name" value="Nucleolus"/>
</dbReference>
<dbReference type="PRO" id="PR:Q8RUF8"/>
<dbReference type="Proteomes" id="UP000006548">
    <property type="component" value="Chromosome 5"/>
</dbReference>
<dbReference type="ExpressionAtlas" id="Q8RUF8">
    <property type="expression patterns" value="baseline and differential"/>
</dbReference>
<dbReference type="GO" id="GO:0009507">
    <property type="term" value="C:chloroplast"/>
    <property type="evidence" value="ECO:0007005"/>
    <property type="project" value="TAIR"/>
</dbReference>
<dbReference type="GO" id="GO:0009570">
    <property type="term" value="C:chloroplast stroma"/>
    <property type="evidence" value="ECO:0007005"/>
    <property type="project" value="TAIR"/>
</dbReference>
<dbReference type="GO" id="GO:0009536">
    <property type="term" value="C:plastid"/>
    <property type="evidence" value="ECO:0007005"/>
    <property type="project" value="TAIR"/>
</dbReference>
<dbReference type="GO" id="GO:0050152">
    <property type="term" value="F:omega-amidase activity"/>
    <property type="evidence" value="ECO:0000314"/>
    <property type="project" value="UniProtKB"/>
</dbReference>
<dbReference type="GO" id="GO:0008270">
    <property type="term" value="F:zinc ion binding"/>
    <property type="evidence" value="ECO:0007005"/>
    <property type="project" value="TAIR"/>
</dbReference>
<dbReference type="GO" id="GO:0006108">
    <property type="term" value="P:malate metabolic process"/>
    <property type="evidence" value="ECO:0000314"/>
    <property type="project" value="UniProtKB"/>
</dbReference>
<dbReference type="GO" id="GO:0006107">
    <property type="term" value="P:oxaloacetate metabolic process"/>
    <property type="evidence" value="ECO:0000314"/>
    <property type="project" value="UniProtKB"/>
</dbReference>
<dbReference type="CDD" id="cd07572">
    <property type="entry name" value="nit"/>
    <property type="match status" value="1"/>
</dbReference>
<dbReference type="FunFam" id="3.60.110.10:FF:000013">
    <property type="entry name" value="Omega-amidase chloroplastic"/>
    <property type="match status" value="1"/>
</dbReference>
<dbReference type="Gene3D" id="3.60.110.10">
    <property type="entry name" value="Carbon-nitrogen hydrolase"/>
    <property type="match status" value="1"/>
</dbReference>
<dbReference type="InterPro" id="IPR003010">
    <property type="entry name" value="C-N_Hydrolase"/>
</dbReference>
<dbReference type="InterPro" id="IPR036526">
    <property type="entry name" value="C-N_Hydrolase_sf"/>
</dbReference>
<dbReference type="InterPro" id="IPR045254">
    <property type="entry name" value="Nit1/2_C-N_Hydrolase"/>
</dbReference>
<dbReference type="PANTHER" id="PTHR23088">
    <property type="entry name" value="NITRILASE-RELATED"/>
    <property type="match status" value="1"/>
</dbReference>
<dbReference type="PANTHER" id="PTHR23088:SF30">
    <property type="entry name" value="OMEGA-AMIDASE NIT2"/>
    <property type="match status" value="1"/>
</dbReference>
<dbReference type="Pfam" id="PF00795">
    <property type="entry name" value="CN_hydrolase"/>
    <property type="match status" value="1"/>
</dbReference>
<dbReference type="SUPFAM" id="SSF56317">
    <property type="entry name" value="Carbon-nitrogen hydrolase"/>
    <property type="match status" value="1"/>
</dbReference>
<dbReference type="PROSITE" id="PS50263">
    <property type="entry name" value="CN_HYDROLASE"/>
    <property type="match status" value="1"/>
</dbReference>
<sequence length="369" mass="40330">MKSAISSSLFFNSKNLLNPNPLSRFISLKSNFLPKLSPRSITSHTLKLPSSSTSALRSISSSMASSFNPEQARVPSALPLPAPPLTKFNIGLCQLSVTSDKKRNISHAKKAIEEAASKGAKLVLLPEIWNSPYSNDSFPVYAEEIDAGGDASPSTAMLSEVSKRLKITIIGGSIPERVGDRLYNTCCVFGSDGELKAKHRKIHLFDIDIPGKITFMESKTLTAGETPTIVDTDVGRIGIGICYDIRFQELAMIYAARGAHLLCYPGAFNMTTGPLHWELLQRARATDNQLYVATCSPARDSGAGYTAWGHSTLVGPFGEVLATTEHEEAIIIAEIDYSILEQRRTSLPLNRQRRGDLYQLVDVQRLDSK</sequence>
<evidence type="ECO:0000255" key="1">
    <source>
        <dbReference type="PROSITE-ProRule" id="PRU00054"/>
    </source>
</evidence>
<evidence type="ECO:0000269" key="2">
    <source>
    </source>
</evidence>
<evidence type="ECO:0000303" key="3">
    <source>
    </source>
</evidence>
<evidence type="ECO:0000303" key="4">
    <source>
    </source>
</evidence>
<evidence type="ECO:0000305" key="5"/>
<evidence type="ECO:0000312" key="6">
    <source>
        <dbReference type="Araport" id="AT5G12040"/>
    </source>
</evidence>
<evidence type="ECO:0000312" key="7">
    <source>
        <dbReference type="EMBL" id="CAB87677.1"/>
    </source>
</evidence>
<evidence type="ECO:0007744" key="8">
    <source>
    </source>
</evidence>
<reference key="1">
    <citation type="journal article" date="2000" name="Nature">
        <title>Sequence and analysis of chromosome 5 of the plant Arabidopsis thaliana.</title>
        <authorList>
            <person name="Tabata S."/>
            <person name="Kaneko T."/>
            <person name="Nakamura Y."/>
            <person name="Kotani H."/>
            <person name="Kato T."/>
            <person name="Asamizu E."/>
            <person name="Miyajima N."/>
            <person name="Sasamoto S."/>
            <person name="Kimura T."/>
            <person name="Hosouchi T."/>
            <person name="Kawashima K."/>
            <person name="Kohara M."/>
            <person name="Matsumoto M."/>
            <person name="Matsuno A."/>
            <person name="Muraki A."/>
            <person name="Nakayama S."/>
            <person name="Nakazaki N."/>
            <person name="Naruo K."/>
            <person name="Okumura S."/>
            <person name="Shinpo S."/>
            <person name="Takeuchi C."/>
            <person name="Wada T."/>
            <person name="Watanabe A."/>
            <person name="Yamada M."/>
            <person name="Yasuda M."/>
            <person name="Sato S."/>
            <person name="de la Bastide M."/>
            <person name="Huang E."/>
            <person name="Spiegel L."/>
            <person name="Gnoj L."/>
            <person name="O'Shaughnessy A."/>
            <person name="Preston R."/>
            <person name="Habermann K."/>
            <person name="Murray J."/>
            <person name="Johnson D."/>
            <person name="Rohlfing T."/>
            <person name="Nelson J."/>
            <person name="Stoneking T."/>
            <person name="Pepin K."/>
            <person name="Spieth J."/>
            <person name="Sekhon M."/>
            <person name="Armstrong J."/>
            <person name="Becker M."/>
            <person name="Belter E."/>
            <person name="Cordum H."/>
            <person name="Cordes M."/>
            <person name="Courtney L."/>
            <person name="Courtney W."/>
            <person name="Dante M."/>
            <person name="Du H."/>
            <person name="Edwards J."/>
            <person name="Fryman J."/>
            <person name="Haakensen B."/>
            <person name="Lamar E."/>
            <person name="Latreille P."/>
            <person name="Leonard S."/>
            <person name="Meyer R."/>
            <person name="Mulvaney E."/>
            <person name="Ozersky P."/>
            <person name="Riley A."/>
            <person name="Strowmatt C."/>
            <person name="Wagner-McPherson C."/>
            <person name="Wollam A."/>
            <person name="Yoakum M."/>
            <person name="Bell M."/>
            <person name="Dedhia N."/>
            <person name="Parnell L."/>
            <person name="Shah R."/>
            <person name="Rodriguez M."/>
            <person name="Hoon See L."/>
            <person name="Vil D."/>
            <person name="Baker J."/>
            <person name="Kirchoff K."/>
            <person name="Toth K."/>
            <person name="King L."/>
            <person name="Bahret A."/>
            <person name="Miller B."/>
            <person name="Marra M.A."/>
            <person name="Martienssen R."/>
            <person name="McCombie W.R."/>
            <person name="Wilson R.K."/>
            <person name="Murphy G."/>
            <person name="Bancroft I."/>
            <person name="Volckaert G."/>
            <person name="Wambutt R."/>
            <person name="Duesterhoeft A."/>
            <person name="Stiekema W."/>
            <person name="Pohl T."/>
            <person name="Entian K.-D."/>
            <person name="Terryn N."/>
            <person name="Hartley N."/>
            <person name="Bent E."/>
            <person name="Johnson S."/>
            <person name="Langham S.-A."/>
            <person name="McCullagh B."/>
            <person name="Robben J."/>
            <person name="Grymonprez B."/>
            <person name="Zimmermann W."/>
            <person name="Ramsperger U."/>
            <person name="Wedler H."/>
            <person name="Balke K."/>
            <person name="Wedler E."/>
            <person name="Peters S."/>
            <person name="van Staveren M."/>
            <person name="Dirkse W."/>
            <person name="Mooijman P."/>
            <person name="Klein Lankhorst R."/>
            <person name="Weitzenegger T."/>
            <person name="Bothe G."/>
            <person name="Rose M."/>
            <person name="Hauf J."/>
            <person name="Berneiser S."/>
            <person name="Hempel S."/>
            <person name="Feldpausch M."/>
            <person name="Lamberth S."/>
            <person name="Villarroel R."/>
            <person name="Gielen J."/>
            <person name="Ardiles W."/>
            <person name="Bents O."/>
            <person name="Lemcke K."/>
            <person name="Kolesov G."/>
            <person name="Mayer K.F.X."/>
            <person name="Rudd S."/>
            <person name="Schoof H."/>
            <person name="Schueller C."/>
            <person name="Zaccaria P."/>
            <person name="Mewes H.-W."/>
            <person name="Bevan M."/>
            <person name="Fransz P.F."/>
        </authorList>
    </citation>
    <scope>NUCLEOTIDE SEQUENCE [LARGE SCALE GENOMIC DNA]</scope>
    <source>
        <strain>cv. Columbia</strain>
    </source>
</reference>
<reference key="2">
    <citation type="journal article" date="2017" name="Plant J.">
        <title>Araport11: a complete reannotation of the Arabidopsis thaliana reference genome.</title>
        <authorList>
            <person name="Cheng C.Y."/>
            <person name="Krishnakumar V."/>
            <person name="Chan A.P."/>
            <person name="Thibaud-Nissen F."/>
            <person name="Schobel S."/>
            <person name="Town C.D."/>
        </authorList>
    </citation>
    <scope>GENOME REANNOTATION</scope>
    <source>
        <strain>cv. Columbia</strain>
    </source>
</reference>
<reference key="3">
    <citation type="journal article" date="2003" name="Science">
        <title>Empirical analysis of transcriptional activity in the Arabidopsis genome.</title>
        <authorList>
            <person name="Yamada K."/>
            <person name="Lim J."/>
            <person name="Dale J.M."/>
            <person name="Chen H."/>
            <person name="Shinn P."/>
            <person name="Palm C.J."/>
            <person name="Southwick A.M."/>
            <person name="Wu H.C."/>
            <person name="Kim C.J."/>
            <person name="Nguyen M."/>
            <person name="Pham P.K."/>
            <person name="Cheuk R.F."/>
            <person name="Karlin-Newmann G."/>
            <person name="Liu S.X."/>
            <person name="Lam B."/>
            <person name="Sakano H."/>
            <person name="Wu T."/>
            <person name="Yu G."/>
            <person name="Miranda M."/>
            <person name="Quach H.L."/>
            <person name="Tripp M."/>
            <person name="Chang C.H."/>
            <person name="Lee J.M."/>
            <person name="Toriumi M.J."/>
            <person name="Chan M.M."/>
            <person name="Tang C.C."/>
            <person name="Onodera C.S."/>
            <person name="Deng J.M."/>
            <person name="Akiyama K."/>
            <person name="Ansari Y."/>
            <person name="Arakawa T."/>
            <person name="Banh J."/>
            <person name="Banno F."/>
            <person name="Bowser L."/>
            <person name="Brooks S.Y."/>
            <person name="Carninci P."/>
            <person name="Chao Q."/>
            <person name="Choy N."/>
            <person name="Enju A."/>
            <person name="Goldsmith A.D."/>
            <person name="Gurjal M."/>
            <person name="Hansen N.F."/>
            <person name="Hayashizaki Y."/>
            <person name="Johnson-Hopson C."/>
            <person name="Hsuan V.W."/>
            <person name="Iida K."/>
            <person name="Karnes M."/>
            <person name="Khan S."/>
            <person name="Koesema E."/>
            <person name="Ishida J."/>
            <person name="Jiang P.X."/>
            <person name="Jones T."/>
            <person name="Kawai J."/>
            <person name="Kamiya A."/>
            <person name="Meyers C."/>
            <person name="Nakajima M."/>
            <person name="Narusaka M."/>
            <person name="Seki M."/>
            <person name="Sakurai T."/>
            <person name="Satou M."/>
            <person name="Tamse R."/>
            <person name="Vaysberg M."/>
            <person name="Wallender E.K."/>
            <person name="Wong C."/>
            <person name="Yamamura Y."/>
            <person name="Yuan S."/>
            <person name="Shinozaki K."/>
            <person name="Davis R.W."/>
            <person name="Theologis A."/>
            <person name="Ecker J.R."/>
        </authorList>
    </citation>
    <scope>NUCLEOTIDE SEQUENCE [LARGE SCALE MRNA] (ISOFORM 1)</scope>
    <source>
        <strain>cv. Columbia</strain>
    </source>
</reference>
<reference key="4">
    <citation type="journal article" date="2004" name="Genome Res.">
        <title>Whole genome sequence comparisons and 'full-length' cDNA sequences: a combined approach to evaluate and improve Arabidopsis genome annotation.</title>
        <authorList>
            <person name="Castelli V."/>
            <person name="Aury J.-M."/>
            <person name="Jaillon O."/>
            <person name="Wincker P."/>
            <person name="Clepet C."/>
            <person name="Menard M."/>
            <person name="Cruaud C."/>
            <person name="Quetier F."/>
            <person name="Scarpelli C."/>
            <person name="Schaechter V."/>
            <person name="Temple G."/>
            <person name="Caboche M."/>
            <person name="Weissenbach J."/>
            <person name="Salanoubat M."/>
        </authorList>
    </citation>
    <scope>NUCLEOTIDE SEQUENCE [LARGE SCALE MRNA] OF 8-294 (ISOFORM 2)</scope>
    <source>
        <strain>cv. Columbia</strain>
    </source>
</reference>
<reference key="5">
    <citation type="journal article" date="2003" name="J. Biol. Chem.">
        <title>Plant C-N hydrolases and the identification of a plant N-carbamoylputrescine amidohydrolase involved in polyamine biosynthesis.</title>
        <authorList>
            <person name="Piotrowski M."/>
            <person name="Janowitz T."/>
            <person name="Kneifel H."/>
        </authorList>
    </citation>
    <scope>GENE FAMILY</scope>
    <scope>NOMENCLATURE</scope>
</reference>
<reference key="6">
    <citation type="journal article" date="2012" name="Mol. Cell. Proteomics">
        <title>Comparative large-scale characterisation of plant vs. mammal proteins reveals similar and idiosyncratic N-alpha acetylation features.</title>
        <authorList>
            <person name="Bienvenut W.V."/>
            <person name="Sumpton D."/>
            <person name="Martinez A."/>
            <person name="Lilla S."/>
            <person name="Espagne C."/>
            <person name="Meinnel T."/>
            <person name="Giglione C."/>
        </authorList>
    </citation>
    <scope>ACETYLATION [LARGE SCALE ANALYSIS] AT ALA-64</scope>
    <scope>CLEAVAGE OF TRANSIT PEPTIDE [LARGE SCALE ANALYSIS] AFTER MET-63</scope>
    <scope>IDENTIFICATION BY MASS SPECTROMETRY [LARGE SCALE ANALYSIS]</scope>
</reference>
<reference key="7">
    <citation type="journal article" date="2014" name="Phytochemistry">
        <title>Identification and characterization of omega-amidase as an enzyme metabolically linked to asparagine transamination in Arabidopsis.</title>
        <authorList>
            <person name="Zhang Q."/>
            <person name="Marsolais F."/>
        </authorList>
    </citation>
    <scope>FUNCTION</scope>
    <scope>CATALYTIC ACTIVITY</scope>
    <scope>BIOPHYSICOCHEMICAL PROPERTIES</scope>
    <scope>DISRUPTION PHENOTYPE</scope>
    <scope>INDUCTION BY ASPARAGINE</scope>
</reference>
<accession>Q8RUF8</accession>
<accession>F4JZF7</accession>
<accession>Q9LYH1</accession>
<proteinExistence type="evidence at protein level"/>
<gene>
    <name evidence="3" type="primary">NLP3</name>
    <name evidence="6" type="ordered locus">At5g12040</name>
    <name evidence="7" type="ORF">F14F18.210</name>
</gene>